<comment type="function">
    <text>Plant non-specific lipid-transfer proteins transfer phospholipids as well as galactolipids across membranes. May play a role in wax or cutin deposition in the cell walls of expanding epidermal cells and certain secretory tissues.</text>
</comment>
<comment type="similarity">
    <text evidence="2">Belongs to the plant LTP family.</text>
</comment>
<accession>P10975</accession>
<accession>Q43120</accession>
<organism>
    <name type="scientific">Ricinus communis</name>
    <name type="common">Castor bean</name>
    <dbReference type="NCBI Taxonomy" id="3988"/>
    <lineage>
        <taxon>Eukaryota</taxon>
        <taxon>Viridiplantae</taxon>
        <taxon>Streptophyta</taxon>
        <taxon>Embryophyta</taxon>
        <taxon>Tracheophyta</taxon>
        <taxon>Spermatophyta</taxon>
        <taxon>Magnoliopsida</taxon>
        <taxon>eudicotyledons</taxon>
        <taxon>Gunneridae</taxon>
        <taxon>Pentapetalae</taxon>
        <taxon>rosids</taxon>
        <taxon>fabids</taxon>
        <taxon>Malpighiales</taxon>
        <taxon>Euphorbiaceae</taxon>
        <taxon>Acalyphoideae</taxon>
        <taxon>Acalypheae</taxon>
        <taxon>Ricinus</taxon>
    </lineage>
</organism>
<dbReference type="EMBL" id="D11077">
    <property type="protein sequence ID" value="BAA01802.1"/>
    <property type="molecule type" value="mRNA"/>
</dbReference>
<dbReference type="EMBL" id="M86354">
    <property type="protein sequence ID" value="AAA33877.1"/>
    <property type="molecule type" value="mRNA"/>
</dbReference>
<dbReference type="PIR" id="S01796">
    <property type="entry name" value="S01796"/>
</dbReference>
<dbReference type="PIR" id="T10084">
    <property type="entry name" value="T10084"/>
</dbReference>
<dbReference type="PIR" id="T10098">
    <property type="entry name" value="T10098"/>
</dbReference>
<dbReference type="RefSeq" id="NP_001411076.1">
    <property type="nucleotide sequence ID" value="NM_001424147.1"/>
</dbReference>
<dbReference type="SMR" id="P10975"/>
<dbReference type="GeneID" id="8287900"/>
<dbReference type="eggNOG" id="ENOG502S1F3">
    <property type="taxonomic scope" value="Eukaryota"/>
</dbReference>
<dbReference type="GO" id="GO:0008289">
    <property type="term" value="F:lipid binding"/>
    <property type="evidence" value="ECO:0007669"/>
    <property type="project" value="UniProtKB-KW"/>
</dbReference>
<dbReference type="GO" id="GO:0006869">
    <property type="term" value="P:lipid transport"/>
    <property type="evidence" value="ECO:0007669"/>
    <property type="project" value="InterPro"/>
</dbReference>
<dbReference type="CDD" id="cd01960">
    <property type="entry name" value="nsLTP1"/>
    <property type="match status" value="1"/>
</dbReference>
<dbReference type="Gene3D" id="1.10.110.10">
    <property type="entry name" value="Plant lipid-transfer and hydrophobic proteins"/>
    <property type="match status" value="1"/>
</dbReference>
<dbReference type="InterPro" id="IPR036312">
    <property type="entry name" value="Bifun_inhib/LTP/seed_sf"/>
</dbReference>
<dbReference type="InterPro" id="IPR016140">
    <property type="entry name" value="Bifunc_inhib/LTP/seed_store"/>
</dbReference>
<dbReference type="InterPro" id="IPR000528">
    <property type="entry name" value="Plant_nsLTP"/>
</dbReference>
<dbReference type="PANTHER" id="PTHR33076">
    <property type="entry name" value="NON-SPECIFIC LIPID-TRANSFER PROTEIN 2-RELATED"/>
    <property type="match status" value="1"/>
</dbReference>
<dbReference type="Pfam" id="PF00234">
    <property type="entry name" value="Tryp_alpha_amyl"/>
    <property type="match status" value="1"/>
</dbReference>
<dbReference type="PRINTS" id="PR00382">
    <property type="entry name" value="LIPIDTRNSFER"/>
</dbReference>
<dbReference type="SMART" id="SM00499">
    <property type="entry name" value="AAI"/>
    <property type="match status" value="1"/>
</dbReference>
<dbReference type="SUPFAM" id="SSF47699">
    <property type="entry name" value="Bifunctional inhibitor/lipid-transfer protein/seed storage 2S albumin"/>
    <property type="match status" value="1"/>
</dbReference>
<dbReference type="PROSITE" id="PS00597">
    <property type="entry name" value="PLANT_LTP"/>
    <property type="match status" value="1"/>
</dbReference>
<sequence>MKNVVFSVLLLLSFLFCLANTNEAAVPCSTVDMKAAACVGFATGKDSKPSQACCTGLQQLAQTVKTVDDKKAICRCLKASSKSLGIKDQFLSKIPAACNIKVGFPVSTNTNCETIH</sequence>
<proteinExistence type="evidence at protein level"/>
<evidence type="ECO:0000269" key="1">
    <source>
    </source>
</evidence>
<evidence type="ECO:0000305" key="2"/>
<reference key="1">
    <citation type="journal article" date="1991" name="J. Biochem.">
        <title>Organ-specific occurrence and expression of the isoforms of nonspecific lipid transfer protein in castor bean seedlings, and molecular cloning of a full-length cDNA for a cotyledon-specific isoform.</title>
        <authorList>
            <person name="Tsuboi S."/>
            <person name="Suga T."/>
            <person name="Takishima K."/>
            <person name="Mamiya G."/>
            <person name="Matsui K."/>
            <person name="Ozeki Y."/>
            <person name="Yamada M."/>
        </authorList>
    </citation>
    <scope>NUCLEOTIDE SEQUENCE [MRNA]</scope>
    <source>
        <tissue>Seedling cotyledon</tissue>
    </source>
</reference>
<reference key="2">
    <citation type="journal article" date="1992" name="Planta">
        <title>The lipid-transfer protein C of Ricinus communis L.: isolation of two cDNA sequences which are strongly and exclusively expressed in cotyledons after germination.</title>
        <authorList>
            <person name="Weig A."/>
            <person name="Komor E."/>
        </authorList>
    </citation>
    <scope>NUCLEOTIDE SEQUENCE [MRNA]</scope>
</reference>
<reference key="3">
    <citation type="journal article" date="1988" name="Eur. J. Biochem.">
        <title>Amino acid sequences of two nonspecific lipid-transfer proteins from germinated castor bean.</title>
        <authorList>
            <person name="Takishima K."/>
            <person name="Watanabe S."/>
            <person name="Yamada M."/>
            <person name="Suga T."/>
            <person name="Mamiya G."/>
        </authorList>
    </citation>
    <scope>PROTEIN SEQUENCE OF 25-116</scope>
    <source>
        <tissue>Seed</tissue>
    </source>
</reference>
<keyword id="KW-0903">Direct protein sequencing</keyword>
<keyword id="KW-1015">Disulfide bond</keyword>
<keyword id="KW-0446">Lipid-binding</keyword>
<keyword id="KW-0732">Signal</keyword>
<keyword id="KW-0813">Transport</keyword>
<feature type="signal peptide" evidence="1">
    <location>
        <begin position="1"/>
        <end position="24"/>
    </location>
</feature>
<feature type="chain" id="PRO_0000018405" description="Non-specific lipid-transfer protein C, cotyledon-specific isoform">
    <location>
        <begin position="25"/>
        <end position="116"/>
    </location>
</feature>
<feature type="disulfide bond">
    <location>
        <begin position="28"/>
        <end position="76"/>
    </location>
</feature>
<feature type="disulfide bond" evidence="2">
    <location>
        <begin position="38"/>
        <end position="53"/>
    </location>
</feature>
<feature type="disulfide bond" evidence="2">
    <location>
        <begin position="54"/>
        <end position="98"/>
    </location>
</feature>
<feature type="disulfide bond">
    <location>
        <begin position="74"/>
        <end position="112"/>
    </location>
</feature>
<feature type="sequence variant">
    <original>T</original>
    <variation>S</variation>
    <location>
        <position position="66"/>
    </location>
</feature>
<feature type="sequence conflict" description="In Ref. 2; AAA33877." evidence="2" ref="2">
    <original>V</original>
    <variation>A</variation>
    <location>
        <position position="4"/>
    </location>
</feature>
<name>NLTPC_RICCO</name>
<protein>
    <recommendedName>
        <fullName>Non-specific lipid-transfer protein C, cotyledon-specific isoform</fullName>
        <shortName>NS-LTP C</shortName>
    </recommendedName>
    <alternativeName>
        <fullName>Phospholipid transfer protein</fullName>
        <shortName>PLTP</shortName>
    </alternativeName>
</protein>